<organism>
    <name type="scientific">Cricetulus griseus</name>
    <name type="common">Chinese hamster</name>
    <name type="synonym">Cricetulus barabensis griseus</name>
    <dbReference type="NCBI Taxonomy" id="10029"/>
    <lineage>
        <taxon>Eukaryota</taxon>
        <taxon>Metazoa</taxon>
        <taxon>Chordata</taxon>
        <taxon>Craniata</taxon>
        <taxon>Vertebrata</taxon>
        <taxon>Euteleostomi</taxon>
        <taxon>Mammalia</taxon>
        <taxon>Eutheria</taxon>
        <taxon>Euarchontoglires</taxon>
        <taxon>Glires</taxon>
        <taxon>Rodentia</taxon>
        <taxon>Myomorpha</taxon>
        <taxon>Muroidea</taxon>
        <taxon>Cricetidae</taxon>
        <taxon>Cricetinae</taxon>
        <taxon>Cricetulus</taxon>
    </lineage>
</organism>
<feature type="signal peptide" evidence="1">
    <location>
        <begin position="1"/>
        <end position="20"/>
    </location>
</feature>
<feature type="chain" id="PRO_0000339355" description="GPI-specific phospholipase A2-like PGAP3">
    <location>
        <begin position="21"/>
        <end position="320"/>
    </location>
</feature>
<feature type="topological domain" description="Lumenal" evidence="1">
    <location>
        <begin position="21"/>
        <end position="98"/>
    </location>
</feature>
<feature type="transmembrane region" description="Helical" evidence="1">
    <location>
        <begin position="99"/>
        <end position="119"/>
    </location>
</feature>
<feature type="topological domain" description="Cytoplasmic" evidence="1">
    <location>
        <begin position="120"/>
        <end position="135"/>
    </location>
</feature>
<feature type="transmembrane region" description="Helical" evidence="1">
    <location>
        <begin position="136"/>
        <end position="156"/>
    </location>
</feature>
<feature type="topological domain" description="Lumenal" evidence="1">
    <location>
        <begin position="157"/>
        <end position="169"/>
    </location>
</feature>
<feature type="transmembrane region" description="Helical" evidence="1">
    <location>
        <begin position="170"/>
        <end position="190"/>
    </location>
</feature>
<feature type="topological domain" description="Cytoplasmic" evidence="1">
    <location>
        <begin position="191"/>
        <end position="198"/>
    </location>
</feature>
<feature type="transmembrane region" description="Helical" evidence="1">
    <location>
        <begin position="199"/>
        <end position="219"/>
    </location>
</feature>
<feature type="topological domain" description="Lumenal" evidence="1">
    <location>
        <begin position="220"/>
        <end position="223"/>
    </location>
</feature>
<feature type="transmembrane region" description="Helical" evidence="1">
    <location>
        <begin position="224"/>
        <end position="244"/>
    </location>
</feature>
<feature type="topological domain" description="Cytoplasmic" evidence="1">
    <location>
        <begin position="245"/>
        <end position="258"/>
    </location>
</feature>
<feature type="transmembrane region" description="Helical" evidence="1">
    <location>
        <begin position="259"/>
        <end position="279"/>
    </location>
</feature>
<feature type="topological domain" description="Lumenal" evidence="1">
    <location>
        <begin position="280"/>
        <end position="282"/>
    </location>
</feature>
<feature type="transmembrane region" description="Helical" evidence="1">
    <location>
        <begin position="283"/>
        <end position="303"/>
    </location>
</feature>
<feature type="topological domain" description="Cytoplasmic" evidence="1">
    <location>
        <begin position="304"/>
        <end position="320"/>
    </location>
</feature>
<feature type="glycosylation site" description="N-linked (GlcNAc...) asparagine" evidence="1">
    <location>
        <position position="40"/>
    </location>
</feature>
<sequence>MAERTARLLLLTVTVGLAWGSQGDREPVYRDCVLRCEERNCSGDALKHFRSLQPIYMSLAGWTCRDDCKYECMWITVGLYLQEGHRVPQFHGKWPFSRFLFIQEPASAVASLLNGLASLVMLCRYRASVPASSPMYHTCMAFAWVSLNAWFWSTVFHTRDTDLTEKMDYFCASAVILHSIYLCCVRTVGLQHPSVARAFGATLLLMLLLHTSYLSLVRFDYSYNMMANVAIGLVNLAWWLAWCLRNHRRLPHTRKCVAVVLLLQGLSLLELLDFPPLFWVLDAHAIWHISTIPVHVLFFRFLEDDSLYLLKESEAKFKLD</sequence>
<protein>
    <recommendedName>
        <fullName evidence="3">GPI-specific phospholipase A2-like PGAP3</fullName>
        <ecNumber evidence="4">3.1.1.-</ecNumber>
    </recommendedName>
    <alternativeName>
        <fullName>PER1-like domain-containing protein 1</fullName>
    </alternativeName>
    <alternativeName>
        <fullName>Post-GPI attachment to proteins factor 3</fullName>
    </alternativeName>
</protein>
<comment type="function">
    <text evidence="2 4">Involved in the fatty acid remodeling steps of GPI-anchor maturation where the unsaturated acyl chain at sn-2 of inositol phosphate is replaced by a saturated stearoyl chain (PubMed:17314402). May catalyze the first step of the fatty acid remodeling, by removing the unsaturated acyl chain at sn-2 of inositol phosphate, generating a lyso-GPI intermediate (Probable). The fatty acid remodeling steps is critical for the integration of GPI-APs into lipid rafts (PubMed:17314402).</text>
</comment>
<comment type="subcellular location">
    <subcellularLocation>
        <location evidence="2">Golgi apparatus membrane</location>
        <topology evidence="1">Multi-pass membrane protein</topology>
    </subcellularLocation>
</comment>
<comment type="similarity">
    <text evidence="3">Belongs to the PGAP3 family.</text>
</comment>
<evidence type="ECO:0000255" key="1"/>
<evidence type="ECO:0000269" key="2">
    <source>
    </source>
</evidence>
<evidence type="ECO:0000305" key="3"/>
<evidence type="ECO:0000305" key="4">
    <source>
    </source>
</evidence>
<name>PGAP3_CRIGR</name>
<accession>A2V7M9</accession>
<reference key="1">
    <citation type="journal article" date="2007" name="Mol. Biol. Cell">
        <title>Fatty acid remodeling of GPI-anchored proteins is required for their raft association.</title>
        <authorList>
            <person name="Maeda Y."/>
            <person name="Tashima Y."/>
            <person name="Houjou T."/>
            <person name="Fujita M."/>
            <person name="Yoko-o T."/>
            <person name="Jigami Y."/>
            <person name="Taguchi R."/>
            <person name="Kinoshita T."/>
        </authorList>
    </citation>
    <scope>NUCLEOTIDE SEQUENCE [MRNA]</scope>
    <scope>FUNCTION</scope>
    <scope>CATALYTIC ACTIVITY</scope>
    <scope>SUBCELLULAR LOCATION</scope>
</reference>
<dbReference type="EC" id="3.1.1.-" evidence="4"/>
<dbReference type="EMBL" id="AB288236">
    <property type="protein sequence ID" value="BAF47369.1"/>
    <property type="molecule type" value="mRNA"/>
</dbReference>
<dbReference type="RefSeq" id="NP_001233642.1">
    <property type="nucleotide sequence ID" value="NM_001246713.1"/>
</dbReference>
<dbReference type="GlyCosmos" id="A2V7M9">
    <property type="glycosylation" value="1 site, No reported glycans"/>
</dbReference>
<dbReference type="PaxDb" id="10029-NP_001233642.1"/>
<dbReference type="Ensembl" id="ENSCGRT00001029015.1">
    <property type="protein sequence ID" value="ENSCGRP00001024769.1"/>
    <property type="gene ID" value="ENSCGRG00001022580.1"/>
</dbReference>
<dbReference type="GeneID" id="100689454"/>
<dbReference type="KEGG" id="cge:100689454"/>
<dbReference type="CTD" id="93210"/>
<dbReference type="eggNOG" id="KOG2970">
    <property type="taxonomic scope" value="Eukaryota"/>
</dbReference>
<dbReference type="GeneTree" id="ENSGT00390000001304"/>
<dbReference type="OMA" id="DFMIEDC"/>
<dbReference type="OrthoDB" id="419770at2759"/>
<dbReference type="Proteomes" id="UP000694386">
    <property type="component" value="Unplaced"/>
</dbReference>
<dbReference type="Proteomes" id="UP001108280">
    <property type="component" value="Chromosome 7"/>
</dbReference>
<dbReference type="GO" id="GO:0005789">
    <property type="term" value="C:endoplasmic reticulum membrane"/>
    <property type="evidence" value="ECO:0000250"/>
    <property type="project" value="UniProtKB"/>
</dbReference>
<dbReference type="GO" id="GO:0000139">
    <property type="term" value="C:Golgi membrane"/>
    <property type="evidence" value="ECO:0007669"/>
    <property type="project" value="UniProtKB-SubCell"/>
</dbReference>
<dbReference type="GO" id="GO:0016788">
    <property type="term" value="F:hydrolase activity, acting on ester bonds"/>
    <property type="evidence" value="ECO:0000315"/>
    <property type="project" value="UniProtKB"/>
</dbReference>
<dbReference type="GO" id="GO:0006506">
    <property type="term" value="P:GPI anchor biosynthetic process"/>
    <property type="evidence" value="ECO:0007669"/>
    <property type="project" value="UniProtKB-KW"/>
</dbReference>
<dbReference type="GO" id="GO:0006505">
    <property type="term" value="P:GPI anchor metabolic process"/>
    <property type="evidence" value="ECO:0000315"/>
    <property type="project" value="UniProtKB"/>
</dbReference>
<dbReference type="InterPro" id="IPR007217">
    <property type="entry name" value="Per1-like"/>
</dbReference>
<dbReference type="PANTHER" id="PTHR13148">
    <property type="entry name" value="PER1-RELATED"/>
    <property type="match status" value="1"/>
</dbReference>
<dbReference type="PANTHER" id="PTHR13148:SF0">
    <property type="entry name" value="POST-GPI ATTACHMENT TO PROTEINS FACTOR 3"/>
    <property type="match status" value="1"/>
</dbReference>
<dbReference type="Pfam" id="PF04080">
    <property type="entry name" value="Per1"/>
    <property type="match status" value="1"/>
</dbReference>
<keyword id="KW-0325">Glycoprotein</keyword>
<keyword id="KW-0333">Golgi apparatus</keyword>
<keyword id="KW-0337">GPI-anchor biosynthesis</keyword>
<keyword id="KW-0378">Hydrolase</keyword>
<keyword id="KW-0472">Membrane</keyword>
<keyword id="KW-0732">Signal</keyword>
<keyword id="KW-0812">Transmembrane</keyword>
<keyword id="KW-1133">Transmembrane helix</keyword>
<proteinExistence type="evidence at protein level"/>
<gene>
    <name type="primary">PGAP3</name>
    <name type="synonym">PERLD1</name>
</gene>